<organism>
    <name type="scientific">Thermoanaerobacter pseudethanolicus (strain ATCC 33223 / 39E)</name>
    <name type="common">Clostridium thermohydrosulfuricum</name>
    <dbReference type="NCBI Taxonomy" id="340099"/>
    <lineage>
        <taxon>Bacteria</taxon>
        <taxon>Bacillati</taxon>
        <taxon>Bacillota</taxon>
        <taxon>Clostridia</taxon>
        <taxon>Thermoanaerobacterales</taxon>
        <taxon>Thermoanaerobacteraceae</taxon>
        <taxon>Thermoanaerobacter</taxon>
    </lineage>
</organism>
<dbReference type="EC" id="2.1.1.177" evidence="1"/>
<dbReference type="EMBL" id="CP000924">
    <property type="protein sequence ID" value="ABY93779.1"/>
    <property type="molecule type" value="Genomic_DNA"/>
</dbReference>
<dbReference type="SMR" id="B0KB08"/>
<dbReference type="STRING" id="340099.Teth39_0106"/>
<dbReference type="KEGG" id="tpd:Teth39_0106"/>
<dbReference type="eggNOG" id="COG1576">
    <property type="taxonomic scope" value="Bacteria"/>
</dbReference>
<dbReference type="HOGENOM" id="CLU_100552_0_0_9"/>
<dbReference type="Proteomes" id="UP000002156">
    <property type="component" value="Chromosome"/>
</dbReference>
<dbReference type="GO" id="GO:0005737">
    <property type="term" value="C:cytoplasm"/>
    <property type="evidence" value="ECO:0007669"/>
    <property type="project" value="UniProtKB-SubCell"/>
</dbReference>
<dbReference type="GO" id="GO:0070038">
    <property type="term" value="F:rRNA (pseudouridine-N3-)-methyltransferase activity"/>
    <property type="evidence" value="ECO:0007669"/>
    <property type="project" value="UniProtKB-UniRule"/>
</dbReference>
<dbReference type="CDD" id="cd18081">
    <property type="entry name" value="RlmH-like"/>
    <property type="match status" value="1"/>
</dbReference>
<dbReference type="Gene3D" id="3.40.1280.10">
    <property type="match status" value="1"/>
</dbReference>
<dbReference type="HAMAP" id="MF_00658">
    <property type="entry name" value="23SrRNA_methyltr_H"/>
    <property type="match status" value="1"/>
</dbReference>
<dbReference type="InterPro" id="IPR029028">
    <property type="entry name" value="Alpha/beta_knot_MTases"/>
</dbReference>
<dbReference type="InterPro" id="IPR003742">
    <property type="entry name" value="RlmH-like"/>
</dbReference>
<dbReference type="InterPro" id="IPR029026">
    <property type="entry name" value="tRNA_m1G_MTases_N"/>
</dbReference>
<dbReference type="NCBIfam" id="NF000985">
    <property type="entry name" value="PRK00103.1-3"/>
    <property type="match status" value="1"/>
</dbReference>
<dbReference type="PANTHER" id="PTHR33603">
    <property type="entry name" value="METHYLTRANSFERASE"/>
    <property type="match status" value="1"/>
</dbReference>
<dbReference type="PANTHER" id="PTHR33603:SF1">
    <property type="entry name" value="RIBOSOMAL RNA LARGE SUBUNIT METHYLTRANSFERASE H"/>
    <property type="match status" value="1"/>
</dbReference>
<dbReference type="Pfam" id="PF02590">
    <property type="entry name" value="SPOUT_MTase"/>
    <property type="match status" value="1"/>
</dbReference>
<dbReference type="PIRSF" id="PIRSF004505">
    <property type="entry name" value="MT_bac"/>
    <property type="match status" value="1"/>
</dbReference>
<dbReference type="SUPFAM" id="SSF75217">
    <property type="entry name" value="alpha/beta knot"/>
    <property type="match status" value="1"/>
</dbReference>
<proteinExistence type="inferred from homology"/>
<reference key="1">
    <citation type="submission" date="2008-01" db="EMBL/GenBank/DDBJ databases">
        <title>Complete sequence of Thermoanaerobacter pseudethanolicus 39E.</title>
        <authorList>
            <person name="Copeland A."/>
            <person name="Lucas S."/>
            <person name="Lapidus A."/>
            <person name="Barry K."/>
            <person name="Glavina del Rio T."/>
            <person name="Dalin E."/>
            <person name="Tice H."/>
            <person name="Pitluck S."/>
            <person name="Bruce D."/>
            <person name="Goodwin L."/>
            <person name="Saunders E."/>
            <person name="Brettin T."/>
            <person name="Detter J.C."/>
            <person name="Han C."/>
            <person name="Schmutz J."/>
            <person name="Larimer F."/>
            <person name="Land M."/>
            <person name="Hauser L."/>
            <person name="Kyrpides N."/>
            <person name="Lykidis A."/>
            <person name="Hemme C."/>
            <person name="Fields M.W."/>
            <person name="He Z."/>
            <person name="Zhou J."/>
            <person name="Richardson P."/>
        </authorList>
    </citation>
    <scope>NUCLEOTIDE SEQUENCE [LARGE SCALE GENOMIC DNA]</scope>
    <source>
        <strain>ATCC 33223 / DSM 2355 / 39E</strain>
    </source>
</reference>
<gene>
    <name evidence="1" type="primary">rlmH1</name>
    <name type="ordered locus">Teth39_0106</name>
</gene>
<evidence type="ECO:0000255" key="1">
    <source>
        <dbReference type="HAMAP-Rule" id="MF_00658"/>
    </source>
</evidence>
<name>RLMH1_THEP3</name>
<comment type="function">
    <text evidence="1">Specifically methylates the pseudouridine at position 1915 (m3Psi1915) in 23S rRNA.</text>
</comment>
<comment type="catalytic activity">
    <reaction evidence="1">
        <text>pseudouridine(1915) in 23S rRNA + S-adenosyl-L-methionine = N(3)-methylpseudouridine(1915) in 23S rRNA + S-adenosyl-L-homocysteine + H(+)</text>
        <dbReference type="Rhea" id="RHEA:42752"/>
        <dbReference type="Rhea" id="RHEA-COMP:10221"/>
        <dbReference type="Rhea" id="RHEA-COMP:10222"/>
        <dbReference type="ChEBI" id="CHEBI:15378"/>
        <dbReference type="ChEBI" id="CHEBI:57856"/>
        <dbReference type="ChEBI" id="CHEBI:59789"/>
        <dbReference type="ChEBI" id="CHEBI:65314"/>
        <dbReference type="ChEBI" id="CHEBI:74486"/>
        <dbReference type="EC" id="2.1.1.177"/>
    </reaction>
</comment>
<comment type="subunit">
    <text evidence="1">Homodimer.</text>
</comment>
<comment type="subcellular location">
    <subcellularLocation>
        <location evidence="1">Cytoplasm</location>
    </subcellularLocation>
</comment>
<comment type="similarity">
    <text evidence="1">Belongs to the RNA methyltransferase RlmH family.</text>
</comment>
<keyword id="KW-0963">Cytoplasm</keyword>
<keyword id="KW-0489">Methyltransferase</keyword>
<keyword id="KW-1185">Reference proteome</keyword>
<keyword id="KW-0698">rRNA processing</keyword>
<keyword id="KW-0949">S-adenosyl-L-methionine</keyword>
<keyword id="KW-0808">Transferase</keyword>
<protein>
    <recommendedName>
        <fullName evidence="1">Ribosomal RNA large subunit methyltransferase H 1</fullName>
        <ecNumber evidence="1">2.1.1.177</ecNumber>
    </recommendedName>
    <alternativeName>
        <fullName evidence="1">23S rRNA (pseudouridine1915-N3)-methyltransferase 1</fullName>
    </alternativeName>
    <alternativeName>
        <fullName evidence="1">23S rRNA m3Psi1915 methyltransferase 1</fullName>
    </alternativeName>
    <alternativeName>
        <fullName evidence="1">rRNA (pseudouridine-N3-)-methyltransferase RlmH 1</fullName>
    </alternativeName>
</protein>
<feature type="chain" id="PRO_0000366667" description="Ribosomal RNA large subunit methyltransferase H 1">
    <location>
        <begin position="1"/>
        <end position="155"/>
    </location>
</feature>
<feature type="binding site" evidence="1">
    <location>
        <position position="76"/>
    </location>
    <ligand>
        <name>S-adenosyl-L-methionine</name>
        <dbReference type="ChEBI" id="CHEBI:59789"/>
    </ligand>
</feature>
<feature type="binding site" evidence="1">
    <location>
        <position position="108"/>
    </location>
    <ligand>
        <name>S-adenosyl-L-methionine</name>
        <dbReference type="ChEBI" id="CHEBI:59789"/>
    </ligand>
</feature>
<feature type="binding site" evidence="1">
    <location>
        <begin position="127"/>
        <end position="132"/>
    </location>
    <ligand>
        <name>S-adenosyl-L-methionine</name>
        <dbReference type="ChEBI" id="CHEBI:59789"/>
    </ligand>
</feature>
<accession>B0KB08</accession>
<sequence length="155" mass="18071">MKIYIIAVGKIKENYISDGIVFYLKKLRPYCEIEIKEVEEEKAPQNLSEKEKEEILRKEGERILSKIKKGSFVVSLAIEGKEIDSYKFSQFIKATFQSGYREMTFVIGGSLGLWENIKKQSHLNLSFSKMTFPHQLMRLILLEQLYLAFDGKNHL</sequence>